<evidence type="ECO:0000255" key="1">
    <source>
        <dbReference type="HAMAP-Rule" id="MF_00679"/>
    </source>
</evidence>
<dbReference type="EMBL" id="CP001120">
    <property type="protein sequence ID" value="ACF69870.1"/>
    <property type="molecule type" value="Genomic_DNA"/>
</dbReference>
<dbReference type="RefSeq" id="WP_001196652.1">
    <property type="nucleotide sequence ID" value="NC_011083.1"/>
</dbReference>
<dbReference type="SMR" id="B4TDB2"/>
<dbReference type="KEGG" id="seh:SeHA_C2801"/>
<dbReference type="HOGENOM" id="CLU_005965_2_1_6"/>
<dbReference type="Proteomes" id="UP000001866">
    <property type="component" value="Chromosome"/>
</dbReference>
<dbReference type="GO" id="GO:0005524">
    <property type="term" value="F:ATP binding"/>
    <property type="evidence" value="ECO:0007669"/>
    <property type="project" value="UniProtKB-KW"/>
</dbReference>
<dbReference type="GO" id="GO:0016887">
    <property type="term" value="F:ATP hydrolysis activity"/>
    <property type="evidence" value="ECO:0007669"/>
    <property type="project" value="UniProtKB-UniRule"/>
</dbReference>
<dbReference type="GO" id="GO:0140662">
    <property type="term" value="F:ATP-dependent protein folding chaperone"/>
    <property type="evidence" value="ECO:0007669"/>
    <property type="project" value="InterPro"/>
</dbReference>
<dbReference type="GO" id="GO:0051082">
    <property type="term" value="F:unfolded protein binding"/>
    <property type="evidence" value="ECO:0007669"/>
    <property type="project" value="InterPro"/>
</dbReference>
<dbReference type="GO" id="GO:0016226">
    <property type="term" value="P:iron-sulfur cluster assembly"/>
    <property type="evidence" value="ECO:0007669"/>
    <property type="project" value="InterPro"/>
</dbReference>
<dbReference type="CDD" id="cd10236">
    <property type="entry name" value="ASKHA_NBD_HSP70_HscA"/>
    <property type="match status" value="1"/>
</dbReference>
<dbReference type="FunFam" id="1.20.1270.10:FF:000006">
    <property type="entry name" value="Chaperone protein HscA"/>
    <property type="match status" value="1"/>
</dbReference>
<dbReference type="FunFam" id="3.30.420.40:FF:000046">
    <property type="entry name" value="Chaperone protein HscA"/>
    <property type="match status" value="1"/>
</dbReference>
<dbReference type="FunFam" id="3.90.640.10:FF:000013">
    <property type="entry name" value="Chaperone protein HscA"/>
    <property type="match status" value="1"/>
</dbReference>
<dbReference type="FunFam" id="2.60.34.10:FF:000005">
    <property type="entry name" value="Chaperone protein HscA homolog"/>
    <property type="match status" value="1"/>
</dbReference>
<dbReference type="Gene3D" id="1.20.1270.10">
    <property type="match status" value="1"/>
</dbReference>
<dbReference type="Gene3D" id="3.30.420.40">
    <property type="match status" value="2"/>
</dbReference>
<dbReference type="Gene3D" id="3.90.640.10">
    <property type="entry name" value="Actin, Chain A, domain 4"/>
    <property type="match status" value="1"/>
</dbReference>
<dbReference type="Gene3D" id="2.60.34.10">
    <property type="entry name" value="Substrate Binding Domain Of DNAk, Chain A, domain 1"/>
    <property type="match status" value="1"/>
</dbReference>
<dbReference type="HAMAP" id="MF_00679">
    <property type="entry name" value="HscA"/>
    <property type="match status" value="1"/>
</dbReference>
<dbReference type="InterPro" id="IPR043129">
    <property type="entry name" value="ATPase_NBD"/>
</dbReference>
<dbReference type="InterPro" id="IPR018181">
    <property type="entry name" value="Heat_shock_70_CS"/>
</dbReference>
<dbReference type="InterPro" id="IPR042039">
    <property type="entry name" value="HscA_NBD"/>
</dbReference>
<dbReference type="InterPro" id="IPR029048">
    <property type="entry name" value="HSP70_C_sf"/>
</dbReference>
<dbReference type="InterPro" id="IPR029047">
    <property type="entry name" value="HSP70_peptide-bd_sf"/>
</dbReference>
<dbReference type="InterPro" id="IPR013126">
    <property type="entry name" value="Hsp_70_fam"/>
</dbReference>
<dbReference type="InterPro" id="IPR010236">
    <property type="entry name" value="ISC_FeS_clus_asmbl_HscA"/>
</dbReference>
<dbReference type="NCBIfam" id="TIGR01991">
    <property type="entry name" value="HscA"/>
    <property type="match status" value="1"/>
</dbReference>
<dbReference type="NCBIfam" id="NF003520">
    <property type="entry name" value="PRK05183.1"/>
    <property type="match status" value="1"/>
</dbReference>
<dbReference type="PANTHER" id="PTHR19375">
    <property type="entry name" value="HEAT SHOCK PROTEIN 70KDA"/>
    <property type="match status" value="1"/>
</dbReference>
<dbReference type="Pfam" id="PF00012">
    <property type="entry name" value="HSP70"/>
    <property type="match status" value="1"/>
</dbReference>
<dbReference type="PRINTS" id="PR00301">
    <property type="entry name" value="HEATSHOCK70"/>
</dbReference>
<dbReference type="SUPFAM" id="SSF53067">
    <property type="entry name" value="Actin-like ATPase domain"/>
    <property type="match status" value="2"/>
</dbReference>
<dbReference type="SUPFAM" id="SSF100934">
    <property type="entry name" value="Heat shock protein 70kD (HSP70), C-terminal subdomain"/>
    <property type="match status" value="1"/>
</dbReference>
<dbReference type="SUPFAM" id="SSF100920">
    <property type="entry name" value="Heat shock protein 70kD (HSP70), peptide-binding domain"/>
    <property type="match status" value="1"/>
</dbReference>
<dbReference type="PROSITE" id="PS00297">
    <property type="entry name" value="HSP70_1"/>
    <property type="match status" value="1"/>
</dbReference>
<dbReference type="PROSITE" id="PS00329">
    <property type="entry name" value="HSP70_2"/>
    <property type="match status" value="1"/>
</dbReference>
<dbReference type="PROSITE" id="PS01036">
    <property type="entry name" value="HSP70_3"/>
    <property type="match status" value="1"/>
</dbReference>
<proteinExistence type="inferred from homology"/>
<protein>
    <recommendedName>
        <fullName evidence="1">Chaperone protein HscA</fullName>
    </recommendedName>
    <alternativeName>
        <fullName evidence="1">Hsc66</fullName>
    </alternativeName>
</protein>
<gene>
    <name evidence="1" type="primary">hscA</name>
    <name type="ordered locus">SeHA_C2801</name>
</gene>
<comment type="function">
    <text evidence="1">Chaperone involved in the maturation of iron-sulfur cluster-containing proteins. Has a low intrinsic ATPase activity which is markedly stimulated by HscB. Involved in the maturation of IscU.</text>
</comment>
<comment type="similarity">
    <text evidence="1">Belongs to the heat shock protein 70 family.</text>
</comment>
<feature type="chain" id="PRO_1000131690" description="Chaperone protein HscA">
    <location>
        <begin position="1"/>
        <end position="616"/>
    </location>
</feature>
<organism>
    <name type="scientific">Salmonella heidelberg (strain SL476)</name>
    <dbReference type="NCBI Taxonomy" id="454169"/>
    <lineage>
        <taxon>Bacteria</taxon>
        <taxon>Pseudomonadati</taxon>
        <taxon>Pseudomonadota</taxon>
        <taxon>Gammaproteobacteria</taxon>
        <taxon>Enterobacterales</taxon>
        <taxon>Enterobacteriaceae</taxon>
        <taxon>Salmonella</taxon>
    </lineage>
</organism>
<name>HSCA_SALHS</name>
<accession>B4TDB2</accession>
<sequence>MALLQISEPGLSAAPHQRRLAAGIDLGTTNSLVATVRSGQAETLPDHEGRHLLPSVVHYQQQGHTVGYAARDNAAQDTANTISSVKRMMGRSLADIQARYPHLPYRFKASVNGLPMIDTAAGLLNPVRVSADILKALAARASESLSGELDGVVITVPAYFDDAQRQGTKDAARLAGLHVLRLLNEPTAAAIAYGLDSGKEGVIAVYDLGGGTFDISILRLSRGVFEVLATGGDSALGGDDFDHLLADYIREQAGIADRSDNRVQRELLDAAIAAKIALSDADTVRVNVAGWQGEITREQFNDLISALVKRTLLACRRALKDAGVDPQDVLEVVMVGGSTRVPLVRERVGEFFGRTPLTAIDPDKVVAIGAAIQADILVGNKPDSEMLLLDVIPLSLGLETMGGLVEKVIPRNTTIPVARAQDFTTFKDGQTAMSIHVMQGERELVQDCRSLARFALRGIPPLPAGGAHIRVTFQVDADGLLSVTAMEKSTGVEASIQVKPSYGLTDSEIASMIKDSMSFAEQDVKARMLAEQKVEAARVLESLTGALTADAALLSAAERQCIDDAAAHLSAVAQGDDVDAIEQAIKNVDKQTQEFAARRMDQSVRRALKGHSVDEV</sequence>
<reference key="1">
    <citation type="journal article" date="2011" name="J. Bacteriol.">
        <title>Comparative genomics of 28 Salmonella enterica isolates: evidence for CRISPR-mediated adaptive sublineage evolution.</title>
        <authorList>
            <person name="Fricke W.F."/>
            <person name="Mammel M.K."/>
            <person name="McDermott P.F."/>
            <person name="Tartera C."/>
            <person name="White D.G."/>
            <person name="Leclerc J.E."/>
            <person name="Ravel J."/>
            <person name="Cebula T.A."/>
        </authorList>
    </citation>
    <scope>NUCLEOTIDE SEQUENCE [LARGE SCALE GENOMIC DNA]</scope>
    <source>
        <strain>SL476</strain>
    </source>
</reference>
<keyword id="KW-0067">ATP-binding</keyword>
<keyword id="KW-0143">Chaperone</keyword>
<keyword id="KW-0547">Nucleotide-binding</keyword>